<gene>
    <name evidence="1" type="primary">mnmA</name>
    <name type="ordered locus">Plav_2188</name>
</gene>
<keyword id="KW-0067">ATP-binding</keyword>
<keyword id="KW-0963">Cytoplasm</keyword>
<keyword id="KW-1015">Disulfide bond</keyword>
<keyword id="KW-0547">Nucleotide-binding</keyword>
<keyword id="KW-1185">Reference proteome</keyword>
<keyword id="KW-0694">RNA-binding</keyword>
<keyword id="KW-0808">Transferase</keyword>
<keyword id="KW-0819">tRNA processing</keyword>
<keyword id="KW-0820">tRNA-binding</keyword>
<name>MNMA_PARL1</name>
<sequence length="399" mass="43044">MTGLNSLDLPGRPEDTRVVVAMSGGVDSSVTAALLKEQGYDVVGITLQLYDHGAAVSRKGACCAGQDIQDARRVADQIGIPHYVLDYEDRFRRAVMDDFADSYAAGETPIPCVRCNERVKFRDLLDTARDLGAAALATGHYIASRRGAAGRELHRPRDEERDQSYFLFATTQEQLEFLRFPLGELTKPEARALADRMGLEVAGKPDSQDICFVPTGRYTTIVEKLRPGASAPGEVVHLDGRVLGRHSGIVNFTIGQRRGLGIGASEPVSEPLFVVKLDPLKRQVIVGPREALETQKLTLRDINWLGDGPFAELPGEGLKIVAKVRSTRPPVPARLFRTGEGAVVELLESEGGVAPGQACVFYDGGGGQRVLGGGWIVRTESCWQVPEAGTSRVAAPTAD</sequence>
<reference key="1">
    <citation type="journal article" date="2011" name="Stand. Genomic Sci.">
        <title>Complete genome sequence of Parvibaculum lavamentivorans type strain (DS-1(T)).</title>
        <authorList>
            <person name="Schleheck D."/>
            <person name="Weiss M."/>
            <person name="Pitluck S."/>
            <person name="Bruce D."/>
            <person name="Land M.L."/>
            <person name="Han S."/>
            <person name="Saunders E."/>
            <person name="Tapia R."/>
            <person name="Detter C."/>
            <person name="Brettin T."/>
            <person name="Han J."/>
            <person name="Woyke T."/>
            <person name="Goodwin L."/>
            <person name="Pennacchio L."/>
            <person name="Nolan M."/>
            <person name="Cook A.M."/>
            <person name="Kjelleberg S."/>
            <person name="Thomas T."/>
        </authorList>
    </citation>
    <scope>NUCLEOTIDE SEQUENCE [LARGE SCALE GENOMIC DNA]</scope>
    <source>
        <strain>DS-1 / DSM 13023 / NCIMB 13966</strain>
    </source>
</reference>
<proteinExistence type="inferred from homology"/>
<accession>A7HV69</accession>
<organism>
    <name type="scientific">Parvibaculum lavamentivorans (strain DS-1 / DSM 13023 / NCIMB 13966)</name>
    <dbReference type="NCBI Taxonomy" id="402881"/>
    <lineage>
        <taxon>Bacteria</taxon>
        <taxon>Pseudomonadati</taxon>
        <taxon>Pseudomonadota</taxon>
        <taxon>Alphaproteobacteria</taxon>
        <taxon>Hyphomicrobiales</taxon>
        <taxon>Parvibaculaceae</taxon>
        <taxon>Parvibaculum</taxon>
    </lineage>
</organism>
<evidence type="ECO:0000255" key="1">
    <source>
        <dbReference type="HAMAP-Rule" id="MF_00144"/>
    </source>
</evidence>
<evidence type="ECO:0000305" key="2"/>
<comment type="function">
    <text evidence="1">Catalyzes the 2-thiolation of uridine at the wobble position (U34) of tRNA, leading to the formation of s(2)U34.</text>
</comment>
<comment type="catalytic activity">
    <reaction evidence="1">
        <text>S-sulfanyl-L-cysteinyl-[protein] + uridine(34) in tRNA + AH2 + ATP = 2-thiouridine(34) in tRNA + L-cysteinyl-[protein] + A + AMP + diphosphate + H(+)</text>
        <dbReference type="Rhea" id="RHEA:47032"/>
        <dbReference type="Rhea" id="RHEA-COMP:10131"/>
        <dbReference type="Rhea" id="RHEA-COMP:11726"/>
        <dbReference type="Rhea" id="RHEA-COMP:11727"/>
        <dbReference type="Rhea" id="RHEA-COMP:11728"/>
        <dbReference type="ChEBI" id="CHEBI:13193"/>
        <dbReference type="ChEBI" id="CHEBI:15378"/>
        <dbReference type="ChEBI" id="CHEBI:17499"/>
        <dbReference type="ChEBI" id="CHEBI:29950"/>
        <dbReference type="ChEBI" id="CHEBI:30616"/>
        <dbReference type="ChEBI" id="CHEBI:33019"/>
        <dbReference type="ChEBI" id="CHEBI:61963"/>
        <dbReference type="ChEBI" id="CHEBI:65315"/>
        <dbReference type="ChEBI" id="CHEBI:87170"/>
        <dbReference type="ChEBI" id="CHEBI:456215"/>
        <dbReference type="EC" id="2.8.1.13"/>
    </reaction>
</comment>
<comment type="subcellular location">
    <subcellularLocation>
        <location evidence="1">Cytoplasm</location>
    </subcellularLocation>
</comment>
<comment type="similarity">
    <text evidence="1">Belongs to the MnmA/TRMU family.</text>
</comment>
<comment type="sequence caution" evidence="2">
    <conflict type="erroneous initiation">
        <sequence resource="EMBL-CDS" id="ABS63802"/>
    </conflict>
</comment>
<protein>
    <recommendedName>
        <fullName evidence="1">tRNA-specific 2-thiouridylase MnmA</fullName>
        <ecNumber evidence="1">2.8.1.13</ecNumber>
    </recommendedName>
</protein>
<dbReference type="EC" id="2.8.1.13" evidence="1"/>
<dbReference type="EMBL" id="CP000774">
    <property type="protein sequence ID" value="ABS63802.1"/>
    <property type="status" value="ALT_INIT"/>
    <property type="molecule type" value="Genomic_DNA"/>
</dbReference>
<dbReference type="SMR" id="A7HV69"/>
<dbReference type="STRING" id="402881.Plav_2188"/>
<dbReference type="KEGG" id="pla:Plav_2188"/>
<dbReference type="eggNOG" id="COG0482">
    <property type="taxonomic scope" value="Bacteria"/>
</dbReference>
<dbReference type="HOGENOM" id="CLU_035188_0_1_5"/>
<dbReference type="OrthoDB" id="9800696at2"/>
<dbReference type="Proteomes" id="UP000006377">
    <property type="component" value="Chromosome"/>
</dbReference>
<dbReference type="GO" id="GO:0005737">
    <property type="term" value="C:cytoplasm"/>
    <property type="evidence" value="ECO:0007669"/>
    <property type="project" value="UniProtKB-SubCell"/>
</dbReference>
<dbReference type="GO" id="GO:0005524">
    <property type="term" value="F:ATP binding"/>
    <property type="evidence" value="ECO:0007669"/>
    <property type="project" value="UniProtKB-KW"/>
</dbReference>
<dbReference type="GO" id="GO:0000049">
    <property type="term" value="F:tRNA binding"/>
    <property type="evidence" value="ECO:0007669"/>
    <property type="project" value="UniProtKB-KW"/>
</dbReference>
<dbReference type="GO" id="GO:0103016">
    <property type="term" value="F:tRNA-uridine 2-sulfurtransferase activity"/>
    <property type="evidence" value="ECO:0007669"/>
    <property type="project" value="UniProtKB-EC"/>
</dbReference>
<dbReference type="GO" id="GO:0002143">
    <property type="term" value="P:tRNA wobble position uridine thiolation"/>
    <property type="evidence" value="ECO:0007669"/>
    <property type="project" value="TreeGrafter"/>
</dbReference>
<dbReference type="CDD" id="cd01998">
    <property type="entry name" value="MnmA_TRMU-like"/>
    <property type="match status" value="1"/>
</dbReference>
<dbReference type="FunFam" id="2.30.30.280:FF:000001">
    <property type="entry name" value="tRNA-specific 2-thiouridylase MnmA"/>
    <property type="match status" value="1"/>
</dbReference>
<dbReference type="FunFam" id="3.40.50.620:FF:000115">
    <property type="entry name" value="tRNA-specific 2-thiouridylase MnmA"/>
    <property type="match status" value="1"/>
</dbReference>
<dbReference type="Gene3D" id="2.30.30.280">
    <property type="entry name" value="Adenine nucleotide alpha hydrolases-like domains"/>
    <property type="match status" value="1"/>
</dbReference>
<dbReference type="Gene3D" id="3.40.50.620">
    <property type="entry name" value="HUPs"/>
    <property type="match status" value="1"/>
</dbReference>
<dbReference type="Gene3D" id="2.40.30.10">
    <property type="entry name" value="Translation factors"/>
    <property type="match status" value="1"/>
</dbReference>
<dbReference type="HAMAP" id="MF_00144">
    <property type="entry name" value="tRNA_thiouridyl_MnmA"/>
    <property type="match status" value="1"/>
</dbReference>
<dbReference type="InterPro" id="IPR004506">
    <property type="entry name" value="MnmA-like"/>
</dbReference>
<dbReference type="InterPro" id="IPR046885">
    <property type="entry name" value="MnmA-like_C"/>
</dbReference>
<dbReference type="InterPro" id="IPR046884">
    <property type="entry name" value="MnmA-like_central"/>
</dbReference>
<dbReference type="InterPro" id="IPR023382">
    <property type="entry name" value="MnmA-like_central_sf"/>
</dbReference>
<dbReference type="InterPro" id="IPR014729">
    <property type="entry name" value="Rossmann-like_a/b/a_fold"/>
</dbReference>
<dbReference type="NCBIfam" id="NF001138">
    <property type="entry name" value="PRK00143.1"/>
    <property type="match status" value="1"/>
</dbReference>
<dbReference type="NCBIfam" id="TIGR00420">
    <property type="entry name" value="trmU"/>
    <property type="match status" value="1"/>
</dbReference>
<dbReference type="PANTHER" id="PTHR11933:SF5">
    <property type="entry name" value="MITOCHONDRIAL TRNA-SPECIFIC 2-THIOURIDYLASE 1"/>
    <property type="match status" value="1"/>
</dbReference>
<dbReference type="PANTHER" id="PTHR11933">
    <property type="entry name" value="TRNA 5-METHYLAMINOMETHYL-2-THIOURIDYLATE -METHYLTRANSFERASE"/>
    <property type="match status" value="1"/>
</dbReference>
<dbReference type="Pfam" id="PF03054">
    <property type="entry name" value="tRNA_Me_trans"/>
    <property type="match status" value="1"/>
</dbReference>
<dbReference type="Pfam" id="PF20258">
    <property type="entry name" value="tRNA_Me_trans_C"/>
    <property type="match status" value="1"/>
</dbReference>
<dbReference type="Pfam" id="PF20259">
    <property type="entry name" value="tRNA_Me_trans_M"/>
    <property type="match status" value="1"/>
</dbReference>
<dbReference type="SUPFAM" id="SSF52402">
    <property type="entry name" value="Adenine nucleotide alpha hydrolases-like"/>
    <property type="match status" value="1"/>
</dbReference>
<feature type="chain" id="PRO_0000349729" description="tRNA-specific 2-thiouridylase MnmA">
    <location>
        <begin position="1"/>
        <end position="399"/>
    </location>
</feature>
<feature type="region of interest" description="Interaction with tRNA" evidence="1">
    <location>
        <begin position="161"/>
        <end position="163"/>
    </location>
</feature>
<feature type="active site" description="Nucleophile" evidence="1">
    <location>
        <position position="115"/>
    </location>
</feature>
<feature type="active site" description="Cysteine persulfide intermediate" evidence="1">
    <location>
        <position position="211"/>
    </location>
</feature>
<feature type="binding site" evidence="1">
    <location>
        <begin position="21"/>
        <end position="28"/>
    </location>
    <ligand>
        <name>ATP</name>
        <dbReference type="ChEBI" id="CHEBI:30616"/>
    </ligand>
</feature>
<feature type="binding site" evidence="1">
    <location>
        <position position="47"/>
    </location>
    <ligand>
        <name>ATP</name>
        <dbReference type="ChEBI" id="CHEBI:30616"/>
    </ligand>
</feature>
<feature type="binding site" evidence="1">
    <location>
        <position position="139"/>
    </location>
    <ligand>
        <name>ATP</name>
        <dbReference type="ChEBI" id="CHEBI:30616"/>
    </ligand>
</feature>
<feature type="site" description="Interaction with tRNA" evidence="1">
    <location>
        <position position="140"/>
    </location>
</feature>
<feature type="site" description="Interaction with tRNA" evidence="1">
    <location>
        <position position="357"/>
    </location>
</feature>
<feature type="disulfide bond" description="Alternate" evidence="1">
    <location>
        <begin position="115"/>
        <end position="211"/>
    </location>
</feature>